<accession>Q55GW8</accession>
<dbReference type="EMBL" id="AAFI02000003">
    <property type="protein sequence ID" value="EAL73583.2"/>
    <property type="molecule type" value="Genomic_DNA"/>
</dbReference>
<dbReference type="RefSeq" id="XP_647066.2">
    <property type="nucleotide sequence ID" value="XM_641974.2"/>
</dbReference>
<dbReference type="SMR" id="Q55GW8"/>
<dbReference type="FunCoup" id="Q55GW8">
    <property type="interactions" value="625"/>
</dbReference>
<dbReference type="PaxDb" id="44689-DDB0304495"/>
<dbReference type="EnsemblProtists" id="EAL73583">
    <property type="protein sequence ID" value="EAL73583"/>
    <property type="gene ID" value="DDB_G0268260"/>
</dbReference>
<dbReference type="GeneID" id="8615871"/>
<dbReference type="KEGG" id="ddi:DDB_G0268260"/>
<dbReference type="dictyBase" id="DDB_G0268260"/>
<dbReference type="VEuPathDB" id="AmoebaDB:DDB_G0268260"/>
<dbReference type="eggNOG" id="KOG3183">
    <property type="taxonomic scope" value="Eukaryota"/>
</dbReference>
<dbReference type="HOGENOM" id="CLU_706813_0_0_1"/>
<dbReference type="InParanoid" id="Q55GW8"/>
<dbReference type="OMA" id="VCEINIL"/>
<dbReference type="PRO" id="PR:Q55GW8"/>
<dbReference type="Proteomes" id="UP000002195">
    <property type="component" value="Chromosome 1"/>
</dbReference>
<dbReference type="GO" id="GO:0005737">
    <property type="term" value="C:cytoplasm"/>
    <property type="evidence" value="ECO:0000318"/>
    <property type="project" value="GO_Central"/>
</dbReference>
<dbReference type="GO" id="GO:0008270">
    <property type="term" value="F:zinc ion binding"/>
    <property type="evidence" value="ECO:0007669"/>
    <property type="project" value="UniProtKB-KW"/>
</dbReference>
<dbReference type="CDD" id="cd01767">
    <property type="entry name" value="UBX"/>
    <property type="match status" value="1"/>
</dbReference>
<dbReference type="Gene3D" id="4.10.1110.10">
    <property type="entry name" value="AN1-like Zinc finger"/>
    <property type="match status" value="2"/>
</dbReference>
<dbReference type="Gene3D" id="3.10.20.90">
    <property type="entry name" value="Phosphatidylinositol 3-kinase Catalytic Subunit, Chain A, domain 1"/>
    <property type="match status" value="1"/>
</dbReference>
<dbReference type="InterPro" id="IPR035896">
    <property type="entry name" value="AN1-like_Znf"/>
</dbReference>
<dbReference type="InterPro" id="IPR029071">
    <property type="entry name" value="Ubiquitin-like_domsf"/>
</dbReference>
<dbReference type="InterPro" id="IPR001012">
    <property type="entry name" value="UBX_dom"/>
</dbReference>
<dbReference type="InterPro" id="IPR000058">
    <property type="entry name" value="Znf_AN1"/>
</dbReference>
<dbReference type="PANTHER" id="PTHR14677">
    <property type="entry name" value="ARSENITE INDUCUBLE RNA ASSOCIATED PROTEIN AIP-1-RELATED"/>
    <property type="match status" value="1"/>
</dbReference>
<dbReference type="PANTHER" id="PTHR14677:SF20">
    <property type="entry name" value="ZINC FINGER AN1-TYPE CONTAINING 2A-RELATED"/>
    <property type="match status" value="1"/>
</dbReference>
<dbReference type="Pfam" id="PF00789">
    <property type="entry name" value="UBX"/>
    <property type="match status" value="1"/>
</dbReference>
<dbReference type="Pfam" id="PF01428">
    <property type="entry name" value="zf-AN1"/>
    <property type="match status" value="2"/>
</dbReference>
<dbReference type="SMART" id="SM00154">
    <property type="entry name" value="ZnF_AN1"/>
    <property type="match status" value="2"/>
</dbReference>
<dbReference type="SUPFAM" id="SSF118310">
    <property type="entry name" value="AN1-like Zinc finger"/>
    <property type="match status" value="2"/>
</dbReference>
<dbReference type="SUPFAM" id="SSF54236">
    <property type="entry name" value="Ubiquitin-like"/>
    <property type="match status" value="1"/>
</dbReference>
<dbReference type="PROSITE" id="PS50033">
    <property type="entry name" value="UBX"/>
    <property type="match status" value="1"/>
</dbReference>
<dbReference type="PROSITE" id="PS51039">
    <property type="entry name" value="ZF_AN1"/>
    <property type="match status" value="2"/>
</dbReference>
<name>Y8260_DICDI</name>
<reference key="1">
    <citation type="journal article" date="2005" name="Nature">
        <title>The genome of the social amoeba Dictyostelium discoideum.</title>
        <authorList>
            <person name="Eichinger L."/>
            <person name="Pachebat J.A."/>
            <person name="Gloeckner G."/>
            <person name="Rajandream M.A."/>
            <person name="Sucgang R."/>
            <person name="Berriman M."/>
            <person name="Song J."/>
            <person name="Olsen R."/>
            <person name="Szafranski K."/>
            <person name="Xu Q."/>
            <person name="Tunggal B."/>
            <person name="Kummerfeld S."/>
            <person name="Madera M."/>
            <person name="Konfortov B.A."/>
            <person name="Rivero F."/>
            <person name="Bankier A.T."/>
            <person name="Lehmann R."/>
            <person name="Hamlin N."/>
            <person name="Davies R."/>
            <person name="Gaudet P."/>
            <person name="Fey P."/>
            <person name="Pilcher K."/>
            <person name="Chen G."/>
            <person name="Saunders D."/>
            <person name="Sodergren E.J."/>
            <person name="Davis P."/>
            <person name="Kerhornou A."/>
            <person name="Nie X."/>
            <person name="Hall N."/>
            <person name="Anjard C."/>
            <person name="Hemphill L."/>
            <person name="Bason N."/>
            <person name="Farbrother P."/>
            <person name="Desany B."/>
            <person name="Just E."/>
            <person name="Morio T."/>
            <person name="Rost R."/>
            <person name="Churcher C.M."/>
            <person name="Cooper J."/>
            <person name="Haydock S."/>
            <person name="van Driessche N."/>
            <person name="Cronin A."/>
            <person name="Goodhead I."/>
            <person name="Muzny D.M."/>
            <person name="Mourier T."/>
            <person name="Pain A."/>
            <person name="Lu M."/>
            <person name="Harper D."/>
            <person name="Lindsay R."/>
            <person name="Hauser H."/>
            <person name="James K.D."/>
            <person name="Quiles M."/>
            <person name="Madan Babu M."/>
            <person name="Saito T."/>
            <person name="Buchrieser C."/>
            <person name="Wardroper A."/>
            <person name="Felder M."/>
            <person name="Thangavelu M."/>
            <person name="Johnson D."/>
            <person name="Knights A."/>
            <person name="Loulseged H."/>
            <person name="Mungall K.L."/>
            <person name="Oliver K."/>
            <person name="Price C."/>
            <person name="Quail M.A."/>
            <person name="Urushihara H."/>
            <person name="Hernandez J."/>
            <person name="Rabbinowitsch E."/>
            <person name="Steffen D."/>
            <person name="Sanders M."/>
            <person name="Ma J."/>
            <person name="Kohara Y."/>
            <person name="Sharp S."/>
            <person name="Simmonds M.N."/>
            <person name="Spiegler S."/>
            <person name="Tivey A."/>
            <person name="Sugano S."/>
            <person name="White B."/>
            <person name="Walker D."/>
            <person name="Woodward J.R."/>
            <person name="Winckler T."/>
            <person name="Tanaka Y."/>
            <person name="Shaulsky G."/>
            <person name="Schleicher M."/>
            <person name="Weinstock G.M."/>
            <person name="Rosenthal A."/>
            <person name="Cox E.C."/>
            <person name="Chisholm R.L."/>
            <person name="Gibbs R.A."/>
            <person name="Loomis W.F."/>
            <person name="Platzer M."/>
            <person name="Kay R.R."/>
            <person name="Williams J.G."/>
            <person name="Dear P.H."/>
            <person name="Noegel A.A."/>
            <person name="Barrell B.G."/>
            <person name="Kuspa A."/>
        </authorList>
    </citation>
    <scope>NUCLEOTIDE SEQUENCE [LARGE SCALE GENOMIC DNA]</scope>
    <source>
        <strain>AX4</strain>
    </source>
</reference>
<sequence length="391" mass="44900">MQQQSPPTAPQQQQQQQRERETYQLDHIGVHCNVTDCRVLDFLPFNCDLCNLSFCMEHKGYENHKCKNIEQRENKIVHPCPVCNCLIKVDSLANLDQTVRFIISVHMDTDCKFNQSKAPKSFKCSLKTCKTSEFVEVKCDKCKSNYCLKHRFPTNHSCTGKPIINSLSKPINTTINNNINNNTNNINNNINNNKNNNNNNNNNNNNNNNNNNNNNNNNNNNNNNNNNNNNNSNNNNKLIYPGNIKKNIVEDKQYYLEQKNQKSELQKLREEQNQRYKSSEEIGEIGIIQTNGARIQYDFMATDTLRSVQKFINSNRTDGTCSYALCTQPTGNPFTLNQLNLSIRQLGLLPVSTLYMLPLDNSNNFNNSGNNNNNSSDQSLLSYLNPFKYFK</sequence>
<keyword id="KW-0479">Metal-binding</keyword>
<keyword id="KW-1185">Reference proteome</keyword>
<keyword id="KW-0677">Repeat</keyword>
<keyword id="KW-0862">Zinc</keyword>
<keyword id="KW-0863">Zinc-finger</keyword>
<gene>
    <name type="ORF">DDB_G0268260</name>
</gene>
<evidence type="ECO:0000255" key="1">
    <source>
        <dbReference type="PROSITE-ProRule" id="PRU00215"/>
    </source>
</evidence>
<evidence type="ECO:0000255" key="2">
    <source>
        <dbReference type="PROSITE-ProRule" id="PRU00449"/>
    </source>
</evidence>
<evidence type="ECO:0000256" key="3">
    <source>
        <dbReference type="SAM" id="MobiDB-lite"/>
    </source>
</evidence>
<proteinExistence type="predicted"/>
<organism>
    <name type="scientific">Dictyostelium discoideum</name>
    <name type="common">Social amoeba</name>
    <dbReference type="NCBI Taxonomy" id="44689"/>
    <lineage>
        <taxon>Eukaryota</taxon>
        <taxon>Amoebozoa</taxon>
        <taxon>Evosea</taxon>
        <taxon>Eumycetozoa</taxon>
        <taxon>Dictyostelia</taxon>
        <taxon>Dictyosteliales</taxon>
        <taxon>Dictyosteliaceae</taxon>
        <taxon>Dictyostelium</taxon>
    </lineage>
</organism>
<feature type="chain" id="PRO_0000369250" description="AN1-type zinc finger and UBX domain-containing protein DDB_G0268260">
    <location>
        <begin position="1"/>
        <end position="391"/>
    </location>
</feature>
<feature type="domain" description="UBX" evidence="1">
    <location>
        <begin position="278"/>
        <end position="356"/>
    </location>
</feature>
<feature type="zinc finger region" description="AN1-type 1" evidence="2">
    <location>
        <begin position="26"/>
        <end position="74"/>
    </location>
</feature>
<feature type="zinc finger region" description="AN1-type 2" evidence="2">
    <location>
        <begin position="118"/>
        <end position="166"/>
    </location>
</feature>
<feature type="region of interest" description="Disordered" evidence="3">
    <location>
        <begin position="1"/>
        <end position="20"/>
    </location>
</feature>
<feature type="region of interest" description="Disordered" evidence="3">
    <location>
        <begin position="185"/>
        <end position="240"/>
    </location>
</feature>
<feature type="compositionally biased region" description="Low complexity" evidence="3">
    <location>
        <begin position="1"/>
        <end position="16"/>
    </location>
</feature>
<feature type="compositionally biased region" description="Low complexity" evidence="3">
    <location>
        <begin position="185"/>
        <end position="236"/>
    </location>
</feature>
<feature type="binding site" evidence="2">
    <location>
        <position position="32"/>
    </location>
    <ligand>
        <name>Zn(2+)</name>
        <dbReference type="ChEBI" id="CHEBI:29105"/>
        <label>1</label>
    </ligand>
</feature>
<feature type="binding site" evidence="2">
    <location>
        <position position="37"/>
    </location>
    <ligand>
        <name>Zn(2+)</name>
        <dbReference type="ChEBI" id="CHEBI:29105"/>
        <label>1</label>
    </ligand>
</feature>
<feature type="binding site" evidence="2">
    <location>
        <position position="47"/>
    </location>
    <ligand>
        <name>Zn(2+)</name>
        <dbReference type="ChEBI" id="CHEBI:29105"/>
        <label>2</label>
    </ligand>
</feature>
<feature type="binding site" evidence="2">
    <location>
        <position position="50"/>
    </location>
    <ligand>
        <name>Zn(2+)</name>
        <dbReference type="ChEBI" id="CHEBI:29105"/>
        <label>2</label>
    </ligand>
</feature>
<feature type="binding site" evidence="2">
    <location>
        <position position="55"/>
    </location>
    <ligand>
        <name>Zn(2+)</name>
        <dbReference type="ChEBI" id="CHEBI:29105"/>
        <label>1</label>
    </ligand>
</feature>
<feature type="binding site" evidence="2">
    <location>
        <position position="58"/>
    </location>
    <ligand>
        <name>Zn(2+)</name>
        <dbReference type="ChEBI" id="CHEBI:29105"/>
        <label>1</label>
    </ligand>
</feature>
<feature type="binding site" evidence="2">
    <location>
        <position position="64"/>
    </location>
    <ligand>
        <name>Zn(2+)</name>
        <dbReference type="ChEBI" id="CHEBI:29105"/>
        <label>2</label>
    </ligand>
</feature>
<feature type="binding site" evidence="2">
    <location>
        <position position="66"/>
    </location>
    <ligand>
        <name>Zn(2+)</name>
        <dbReference type="ChEBI" id="CHEBI:29105"/>
        <label>2</label>
    </ligand>
</feature>
<feature type="binding site" evidence="2">
    <location>
        <position position="124"/>
    </location>
    <ligand>
        <name>Zn(2+)</name>
        <dbReference type="ChEBI" id="CHEBI:29105"/>
        <label>3</label>
    </ligand>
</feature>
<feature type="binding site" evidence="2">
    <location>
        <position position="129"/>
    </location>
    <ligand>
        <name>Zn(2+)</name>
        <dbReference type="ChEBI" id="CHEBI:29105"/>
        <label>3</label>
    </ligand>
</feature>
<feature type="binding site" evidence="2">
    <location>
        <position position="139"/>
    </location>
    <ligand>
        <name>Zn(2+)</name>
        <dbReference type="ChEBI" id="CHEBI:29105"/>
        <label>4</label>
    </ligand>
</feature>
<feature type="binding site" evidence="2">
    <location>
        <position position="142"/>
    </location>
    <ligand>
        <name>Zn(2+)</name>
        <dbReference type="ChEBI" id="CHEBI:29105"/>
        <label>4</label>
    </ligand>
</feature>
<feature type="binding site" evidence="2">
    <location>
        <position position="147"/>
    </location>
    <ligand>
        <name>Zn(2+)</name>
        <dbReference type="ChEBI" id="CHEBI:29105"/>
        <label>3</label>
    </ligand>
</feature>
<feature type="binding site" evidence="2">
    <location>
        <position position="150"/>
    </location>
    <ligand>
        <name>Zn(2+)</name>
        <dbReference type="ChEBI" id="CHEBI:29105"/>
        <label>3</label>
    </ligand>
</feature>
<feature type="binding site" evidence="2">
    <location>
        <position position="156"/>
    </location>
    <ligand>
        <name>Zn(2+)</name>
        <dbReference type="ChEBI" id="CHEBI:29105"/>
        <label>4</label>
    </ligand>
</feature>
<feature type="binding site" evidence="2">
    <location>
        <position position="158"/>
    </location>
    <ligand>
        <name>Zn(2+)</name>
        <dbReference type="ChEBI" id="CHEBI:29105"/>
        <label>4</label>
    </ligand>
</feature>
<protein>
    <recommendedName>
        <fullName>AN1-type zinc finger and UBX domain-containing protein DDB_G0268260</fullName>
    </recommendedName>
</protein>